<organism>
    <name type="scientific">Opitutus terrae (strain DSM 11246 / JCM 15787 / PB90-1)</name>
    <dbReference type="NCBI Taxonomy" id="452637"/>
    <lineage>
        <taxon>Bacteria</taxon>
        <taxon>Pseudomonadati</taxon>
        <taxon>Verrucomicrobiota</taxon>
        <taxon>Opitutia</taxon>
        <taxon>Opitutales</taxon>
        <taxon>Opitutaceae</taxon>
        <taxon>Opitutus</taxon>
    </lineage>
</organism>
<sequence>MRTTTRRAPRVGIGGPVGSGKTMLCLKLCQRLRERLSMAVVTNDIYCSEDAQFLIRQSALPAARIAGVETGGCPHTAIRDDTTMNEQACRALEATFPELDLLLVESGGDNLTATFSPELVDAFIYVIDVAEGDKIPRKGGPAIRFSDLLIINKVDLAPLVGADLEVMARDATAQRGGRPFLLCDLKREHNLDAVIGWLEREVLFARTAAPVG</sequence>
<accession>B1ZNZ7</accession>
<feature type="chain" id="PRO_0000347410" description="Urease accessory protein UreG">
    <location>
        <begin position="1"/>
        <end position="212"/>
    </location>
</feature>
<feature type="binding site" evidence="1">
    <location>
        <begin position="15"/>
        <end position="22"/>
    </location>
    <ligand>
        <name>GTP</name>
        <dbReference type="ChEBI" id="CHEBI:37565"/>
    </ligand>
</feature>
<proteinExistence type="inferred from homology"/>
<name>UREG_OPITP</name>
<keyword id="KW-0143">Chaperone</keyword>
<keyword id="KW-0963">Cytoplasm</keyword>
<keyword id="KW-0342">GTP-binding</keyword>
<keyword id="KW-0996">Nickel insertion</keyword>
<keyword id="KW-0547">Nucleotide-binding</keyword>
<keyword id="KW-1185">Reference proteome</keyword>
<evidence type="ECO:0000255" key="1">
    <source>
        <dbReference type="HAMAP-Rule" id="MF_01389"/>
    </source>
</evidence>
<protein>
    <recommendedName>
        <fullName evidence="1">Urease accessory protein UreG</fullName>
    </recommendedName>
</protein>
<gene>
    <name evidence="1" type="primary">ureG</name>
    <name type="ordered locus">Oter_4213</name>
</gene>
<reference key="1">
    <citation type="journal article" date="2011" name="J. Bacteriol.">
        <title>Genome sequence of the verrucomicrobium Opitutus terrae PB90-1, an abundant inhabitant of rice paddy soil ecosystems.</title>
        <authorList>
            <person name="van Passel M.W."/>
            <person name="Kant R."/>
            <person name="Palva A."/>
            <person name="Copeland A."/>
            <person name="Lucas S."/>
            <person name="Lapidus A."/>
            <person name="Glavina del Rio T."/>
            <person name="Pitluck S."/>
            <person name="Goltsman E."/>
            <person name="Clum A."/>
            <person name="Sun H."/>
            <person name="Schmutz J."/>
            <person name="Larimer F.W."/>
            <person name="Land M.L."/>
            <person name="Hauser L."/>
            <person name="Kyrpides N."/>
            <person name="Mikhailova N."/>
            <person name="Richardson P.P."/>
            <person name="Janssen P.H."/>
            <person name="de Vos W.M."/>
            <person name="Smidt H."/>
        </authorList>
    </citation>
    <scope>NUCLEOTIDE SEQUENCE [LARGE SCALE GENOMIC DNA]</scope>
    <source>
        <strain>DSM 11246 / JCM 15787 / PB90-1</strain>
    </source>
</reference>
<dbReference type="EMBL" id="CP001032">
    <property type="protein sequence ID" value="ACB77486.1"/>
    <property type="molecule type" value="Genomic_DNA"/>
</dbReference>
<dbReference type="RefSeq" id="WP_012377014.1">
    <property type="nucleotide sequence ID" value="NC_010571.1"/>
</dbReference>
<dbReference type="SMR" id="B1ZNZ7"/>
<dbReference type="STRING" id="452637.Oter_4213"/>
<dbReference type="KEGG" id="ote:Oter_4213"/>
<dbReference type="eggNOG" id="COG0378">
    <property type="taxonomic scope" value="Bacteria"/>
</dbReference>
<dbReference type="HOGENOM" id="CLU_072144_1_0_0"/>
<dbReference type="OrthoDB" id="9802035at2"/>
<dbReference type="Proteomes" id="UP000007013">
    <property type="component" value="Chromosome"/>
</dbReference>
<dbReference type="GO" id="GO:0005737">
    <property type="term" value="C:cytoplasm"/>
    <property type="evidence" value="ECO:0007669"/>
    <property type="project" value="UniProtKB-SubCell"/>
</dbReference>
<dbReference type="GO" id="GO:0005525">
    <property type="term" value="F:GTP binding"/>
    <property type="evidence" value="ECO:0007669"/>
    <property type="project" value="UniProtKB-KW"/>
</dbReference>
<dbReference type="GO" id="GO:0003924">
    <property type="term" value="F:GTPase activity"/>
    <property type="evidence" value="ECO:0007669"/>
    <property type="project" value="InterPro"/>
</dbReference>
<dbReference type="GO" id="GO:0016151">
    <property type="term" value="F:nickel cation binding"/>
    <property type="evidence" value="ECO:0007669"/>
    <property type="project" value="UniProtKB-UniRule"/>
</dbReference>
<dbReference type="GO" id="GO:0043419">
    <property type="term" value="P:urea catabolic process"/>
    <property type="evidence" value="ECO:0007669"/>
    <property type="project" value="InterPro"/>
</dbReference>
<dbReference type="CDD" id="cd05540">
    <property type="entry name" value="UreG"/>
    <property type="match status" value="1"/>
</dbReference>
<dbReference type="Gene3D" id="3.40.50.300">
    <property type="entry name" value="P-loop containing nucleotide triphosphate hydrolases"/>
    <property type="match status" value="1"/>
</dbReference>
<dbReference type="HAMAP" id="MF_01389">
    <property type="entry name" value="UreG"/>
    <property type="match status" value="1"/>
</dbReference>
<dbReference type="InterPro" id="IPR003495">
    <property type="entry name" value="CobW/HypB/UreG_nucleotide-bd"/>
</dbReference>
<dbReference type="InterPro" id="IPR027417">
    <property type="entry name" value="P-loop_NTPase"/>
</dbReference>
<dbReference type="InterPro" id="IPR004400">
    <property type="entry name" value="UreG"/>
</dbReference>
<dbReference type="NCBIfam" id="TIGR00101">
    <property type="entry name" value="ureG"/>
    <property type="match status" value="1"/>
</dbReference>
<dbReference type="PANTHER" id="PTHR31715">
    <property type="entry name" value="UREASE ACCESSORY PROTEIN G"/>
    <property type="match status" value="1"/>
</dbReference>
<dbReference type="PANTHER" id="PTHR31715:SF0">
    <property type="entry name" value="UREASE ACCESSORY PROTEIN G"/>
    <property type="match status" value="1"/>
</dbReference>
<dbReference type="Pfam" id="PF02492">
    <property type="entry name" value="cobW"/>
    <property type="match status" value="1"/>
</dbReference>
<dbReference type="PIRSF" id="PIRSF005624">
    <property type="entry name" value="Ni-bind_GTPase"/>
    <property type="match status" value="1"/>
</dbReference>
<dbReference type="SUPFAM" id="SSF52540">
    <property type="entry name" value="P-loop containing nucleoside triphosphate hydrolases"/>
    <property type="match status" value="1"/>
</dbReference>
<comment type="function">
    <text evidence="1">Facilitates the functional incorporation of the urease nickel metallocenter. This process requires GTP hydrolysis, probably effectuated by UreG.</text>
</comment>
<comment type="subunit">
    <text evidence="1">Homodimer. UreD, UreF and UreG form a complex that acts as a GTP-hydrolysis-dependent molecular chaperone, activating the urease apoprotein by helping to assemble the nickel containing metallocenter of UreC. The UreE protein probably delivers the nickel.</text>
</comment>
<comment type="subcellular location">
    <subcellularLocation>
        <location evidence="1">Cytoplasm</location>
    </subcellularLocation>
</comment>
<comment type="similarity">
    <text evidence="1">Belongs to the SIMIBI class G3E GTPase family. UreG subfamily.</text>
</comment>